<accession>C3MQM6</accession>
<protein>
    <recommendedName>
        <fullName evidence="2 3">16S rRNA aminocarboxypropyltransferase</fullName>
        <ecNumber evidence="2">2.5.1.157</ecNumber>
    </recommendedName>
</protein>
<reference key="1">
    <citation type="journal article" date="2009" name="Proc. Natl. Acad. Sci. U.S.A.">
        <title>Biogeography of the Sulfolobus islandicus pan-genome.</title>
        <authorList>
            <person name="Reno M.L."/>
            <person name="Held N.L."/>
            <person name="Fields C.J."/>
            <person name="Burke P.V."/>
            <person name="Whitaker R.J."/>
        </authorList>
    </citation>
    <scope>NUCLEOTIDE SEQUENCE [LARGE SCALE GENOMIC DNA]</scope>
    <source>
        <strain>L.S.2.15 / Lassen #1</strain>
    </source>
</reference>
<gene>
    <name type="ordered locus">LS215_1685</name>
</gene>
<evidence type="ECO:0000250" key="1">
    <source>
        <dbReference type="UniProtKB" id="E1QU22"/>
    </source>
</evidence>
<evidence type="ECO:0000255" key="2">
    <source>
        <dbReference type="HAMAP-Rule" id="MF_01116"/>
    </source>
</evidence>
<evidence type="ECO:0000305" key="3"/>
<feature type="chain" id="PRO_1000213601" description="16S rRNA aminocarboxypropyltransferase">
    <location>
        <begin position="1"/>
        <end position="166"/>
    </location>
</feature>
<feature type="binding site" evidence="1 2">
    <location>
        <position position="17"/>
    </location>
    <ligand>
        <name>S-adenosyl-L-methionine</name>
        <dbReference type="ChEBI" id="CHEBI:59789"/>
    </ligand>
</feature>
<feature type="binding site" evidence="1 2">
    <location>
        <position position="62"/>
    </location>
    <ligand>
        <name>S-adenosyl-L-methionine</name>
        <dbReference type="ChEBI" id="CHEBI:59789"/>
    </ligand>
</feature>
<feature type="binding site" evidence="1 2">
    <location>
        <position position="84"/>
    </location>
    <ligand>
        <name>S-adenosyl-L-methionine</name>
        <dbReference type="ChEBI" id="CHEBI:59789"/>
    </ligand>
</feature>
<feature type="binding site" evidence="1 2">
    <location>
        <position position="99"/>
    </location>
    <ligand>
        <name>S-adenosyl-L-methionine</name>
        <dbReference type="ChEBI" id="CHEBI:59789"/>
    </ligand>
</feature>
<feature type="binding site" evidence="2">
    <location>
        <position position="103"/>
    </location>
    <ligand>
        <name>S-adenosyl-L-methionine</name>
        <dbReference type="ChEBI" id="CHEBI:59789"/>
    </ligand>
</feature>
<organism>
    <name type="scientific">Saccharolobus islandicus (strain L.S.2.15 / Lassen #1)</name>
    <name type="common">Sulfolobus islandicus</name>
    <dbReference type="NCBI Taxonomy" id="429572"/>
    <lineage>
        <taxon>Archaea</taxon>
        <taxon>Thermoproteota</taxon>
        <taxon>Thermoprotei</taxon>
        <taxon>Sulfolobales</taxon>
        <taxon>Sulfolobaceae</taxon>
        <taxon>Saccharolobus</taxon>
    </lineage>
</organism>
<keyword id="KW-0963">Cytoplasm</keyword>
<keyword id="KW-0690">Ribosome biogenesis</keyword>
<keyword id="KW-0698">rRNA processing</keyword>
<keyword id="KW-0949">S-adenosyl-L-methionine</keyword>
<keyword id="KW-0808">Transferase</keyword>
<comment type="function">
    <text evidence="2">Aminocarboxypropyltransferase that catalyzes the aminocarboxypropyl transfer on pseudouridine corresponding to position 914 in M.jannaschii 16S rRNA. It constitutes the last step in biosynthesis of the hypermodified N1-methyl-N3-(3-amino-3-carboxypropyl) pseudouridine (m1acp3-Psi).</text>
</comment>
<comment type="catalytic activity">
    <reaction evidence="2">
        <text>an N(1)-methylpseudouridine in rRNA + S-adenosyl-L-methionine = N(1)-methyl-N(3)-[(3S)-3-amino-3-carboxypropyl]pseudouridine in rRNA + S-methyl-5'-thioadenosine + H(+)</text>
        <dbReference type="Rhea" id="RHEA:63296"/>
        <dbReference type="Rhea" id="RHEA-COMP:11634"/>
        <dbReference type="Rhea" id="RHEA-COMP:16310"/>
        <dbReference type="ChEBI" id="CHEBI:15378"/>
        <dbReference type="ChEBI" id="CHEBI:17509"/>
        <dbReference type="ChEBI" id="CHEBI:59789"/>
        <dbReference type="ChEBI" id="CHEBI:74890"/>
        <dbReference type="ChEBI" id="CHEBI:146234"/>
        <dbReference type="EC" id="2.5.1.157"/>
    </reaction>
</comment>
<comment type="subcellular location">
    <subcellularLocation>
        <location evidence="2">Cytoplasm</location>
    </subcellularLocation>
</comment>
<comment type="similarity">
    <text evidence="2">Belongs to the TDD superfamily. TSR3 family.</text>
</comment>
<name>TSR3_SACI2</name>
<proteinExistence type="inferred from homology"/>
<dbReference type="EC" id="2.5.1.157" evidence="2"/>
<dbReference type="EMBL" id="CP001399">
    <property type="protein sequence ID" value="ACP35689.1"/>
    <property type="molecule type" value="Genomic_DNA"/>
</dbReference>
<dbReference type="RefSeq" id="WP_012711570.1">
    <property type="nucleotide sequence ID" value="NC_012589.1"/>
</dbReference>
<dbReference type="SMR" id="C3MQM6"/>
<dbReference type="KEGG" id="sis:LS215_1685"/>
<dbReference type="HOGENOM" id="CLU_035060_4_1_2"/>
<dbReference type="OrthoDB" id="7441at2157"/>
<dbReference type="Proteomes" id="UP000001747">
    <property type="component" value="Chromosome"/>
</dbReference>
<dbReference type="GO" id="GO:0005737">
    <property type="term" value="C:cytoplasm"/>
    <property type="evidence" value="ECO:0007669"/>
    <property type="project" value="UniProtKB-SubCell"/>
</dbReference>
<dbReference type="GO" id="GO:0106388">
    <property type="term" value="F:18S rRNA aminocarboxypropyltransferase activity"/>
    <property type="evidence" value="ECO:0007669"/>
    <property type="project" value="InterPro"/>
</dbReference>
<dbReference type="GO" id="GO:1904047">
    <property type="term" value="F:S-adenosyl-L-methionine binding"/>
    <property type="evidence" value="ECO:0007669"/>
    <property type="project" value="UniProtKB-UniRule"/>
</dbReference>
<dbReference type="GO" id="GO:0000455">
    <property type="term" value="P:enzyme-directed rRNA pseudouridine synthesis"/>
    <property type="evidence" value="ECO:0007669"/>
    <property type="project" value="UniProtKB-UniRule"/>
</dbReference>
<dbReference type="HAMAP" id="MF_01116">
    <property type="entry name" value="TSR3"/>
    <property type="match status" value="1"/>
</dbReference>
<dbReference type="InterPro" id="IPR007209">
    <property type="entry name" value="RNaseL-inhib-like_metal-bd_dom"/>
</dbReference>
<dbReference type="InterPro" id="IPR022968">
    <property type="entry name" value="Tsr3-like"/>
</dbReference>
<dbReference type="InterPro" id="IPR007177">
    <property type="entry name" value="Tsr3_C"/>
</dbReference>
<dbReference type="NCBIfam" id="NF002621">
    <property type="entry name" value="PRK02287.1"/>
    <property type="match status" value="1"/>
</dbReference>
<dbReference type="PANTHER" id="PTHR20426:SF0">
    <property type="entry name" value="18S RRNA AMINOCARBOXYPROPYLTRANSFERASE"/>
    <property type="match status" value="1"/>
</dbReference>
<dbReference type="PANTHER" id="PTHR20426">
    <property type="entry name" value="RIBOSOME BIOGENESIS PROTEIN TSR3 HOMOLOG"/>
    <property type="match status" value="1"/>
</dbReference>
<dbReference type="Pfam" id="PF04068">
    <property type="entry name" value="Fer4_RLI"/>
    <property type="match status" value="1"/>
</dbReference>
<dbReference type="Pfam" id="PF04034">
    <property type="entry name" value="Ribo_biogen_C"/>
    <property type="match status" value="1"/>
</dbReference>
<sequence length="166" mass="19314">MKVYVIDYHKDDPKKCTGRKLVKLKLAELTRVGRGIILNPFSERTLSINDKDILIKSGITIIDTSWNNTSQNEFKNVRGEHRRLPILFAGNPIHYGIAYKLSSLEALMATLYILDEVKEAIKFSNVVKWGHTFIELNKELLEAYRNKDEEEIKKIEKEIIEKILRK</sequence>